<organism>
    <name type="scientific">Chlamydia muridarum (strain MoPn / Nigg)</name>
    <dbReference type="NCBI Taxonomy" id="243161"/>
    <lineage>
        <taxon>Bacteria</taxon>
        <taxon>Pseudomonadati</taxon>
        <taxon>Chlamydiota</taxon>
        <taxon>Chlamydiia</taxon>
        <taxon>Chlamydiales</taxon>
        <taxon>Chlamydiaceae</taxon>
        <taxon>Chlamydia/Chlamydophila group</taxon>
        <taxon>Chlamydia</taxon>
    </lineage>
</organism>
<sequence>MTKNTIQESVATGRRKQAVSSVRLRSGNGKIDVNGKTLEQYFPLEVQRATILAPLKMLGDVNSFDLIIRVSGGGVQGQVIATRLGLARAVLQEKEDMKQELKSQGFLTRDPRKKERKKYGRKKARKSFQFSKR</sequence>
<name>RS9_CHLMU</name>
<feature type="chain" id="PRO_0000111342" description="Small ribosomal subunit protein uS9">
    <location>
        <begin position="1"/>
        <end position="133"/>
    </location>
</feature>
<feature type="region of interest" description="Disordered" evidence="1">
    <location>
        <begin position="97"/>
        <end position="133"/>
    </location>
</feature>
<feature type="compositionally biased region" description="Basic residues" evidence="1">
    <location>
        <begin position="114"/>
        <end position="133"/>
    </location>
</feature>
<proteinExistence type="inferred from homology"/>
<dbReference type="EMBL" id="AE002160">
    <property type="protein sequence ID" value="AAF39259.1"/>
    <property type="molecule type" value="Genomic_DNA"/>
</dbReference>
<dbReference type="PIR" id="H81705">
    <property type="entry name" value="H81705"/>
</dbReference>
<dbReference type="RefSeq" id="WP_010230381.1">
    <property type="nucleotide sequence ID" value="NZ_CP063055.1"/>
</dbReference>
<dbReference type="SMR" id="Q9PKR2"/>
<dbReference type="GeneID" id="1245754"/>
<dbReference type="KEGG" id="cmu:TC_0402"/>
<dbReference type="eggNOG" id="COG0103">
    <property type="taxonomic scope" value="Bacteria"/>
</dbReference>
<dbReference type="HOGENOM" id="CLU_046483_2_1_0"/>
<dbReference type="OrthoDB" id="9803965at2"/>
<dbReference type="Proteomes" id="UP000000800">
    <property type="component" value="Chromosome"/>
</dbReference>
<dbReference type="GO" id="GO:0022627">
    <property type="term" value="C:cytosolic small ribosomal subunit"/>
    <property type="evidence" value="ECO:0007669"/>
    <property type="project" value="TreeGrafter"/>
</dbReference>
<dbReference type="GO" id="GO:0003723">
    <property type="term" value="F:RNA binding"/>
    <property type="evidence" value="ECO:0007669"/>
    <property type="project" value="TreeGrafter"/>
</dbReference>
<dbReference type="GO" id="GO:0003735">
    <property type="term" value="F:structural constituent of ribosome"/>
    <property type="evidence" value="ECO:0007669"/>
    <property type="project" value="InterPro"/>
</dbReference>
<dbReference type="GO" id="GO:0006412">
    <property type="term" value="P:translation"/>
    <property type="evidence" value="ECO:0007669"/>
    <property type="project" value="UniProtKB-UniRule"/>
</dbReference>
<dbReference type="FunFam" id="3.30.230.10:FF:000001">
    <property type="entry name" value="30S ribosomal protein S9"/>
    <property type="match status" value="1"/>
</dbReference>
<dbReference type="Gene3D" id="3.30.230.10">
    <property type="match status" value="1"/>
</dbReference>
<dbReference type="HAMAP" id="MF_00532_B">
    <property type="entry name" value="Ribosomal_uS9_B"/>
    <property type="match status" value="1"/>
</dbReference>
<dbReference type="InterPro" id="IPR020568">
    <property type="entry name" value="Ribosomal_Su5_D2-typ_SF"/>
</dbReference>
<dbReference type="InterPro" id="IPR000754">
    <property type="entry name" value="Ribosomal_uS9"/>
</dbReference>
<dbReference type="InterPro" id="IPR023035">
    <property type="entry name" value="Ribosomal_uS9_bac/plastid"/>
</dbReference>
<dbReference type="InterPro" id="IPR020574">
    <property type="entry name" value="Ribosomal_uS9_CS"/>
</dbReference>
<dbReference type="InterPro" id="IPR014721">
    <property type="entry name" value="Ribsml_uS5_D2-typ_fold_subgr"/>
</dbReference>
<dbReference type="NCBIfam" id="NF001099">
    <property type="entry name" value="PRK00132.1"/>
    <property type="match status" value="1"/>
</dbReference>
<dbReference type="PANTHER" id="PTHR21569">
    <property type="entry name" value="RIBOSOMAL PROTEIN S9"/>
    <property type="match status" value="1"/>
</dbReference>
<dbReference type="PANTHER" id="PTHR21569:SF1">
    <property type="entry name" value="SMALL RIBOSOMAL SUBUNIT PROTEIN US9M"/>
    <property type="match status" value="1"/>
</dbReference>
<dbReference type="Pfam" id="PF00380">
    <property type="entry name" value="Ribosomal_S9"/>
    <property type="match status" value="1"/>
</dbReference>
<dbReference type="SUPFAM" id="SSF54211">
    <property type="entry name" value="Ribosomal protein S5 domain 2-like"/>
    <property type="match status" value="1"/>
</dbReference>
<dbReference type="PROSITE" id="PS00360">
    <property type="entry name" value="RIBOSOMAL_S9"/>
    <property type="match status" value="1"/>
</dbReference>
<evidence type="ECO:0000256" key="1">
    <source>
        <dbReference type="SAM" id="MobiDB-lite"/>
    </source>
</evidence>
<evidence type="ECO:0000305" key="2"/>
<gene>
    <name type="primary">rpsI</name>
    <name type="ordered locus">TC_0402</name>
</gene>
<protein>
    <recommendedName>
        <fullName evidence="2">Small ribosomal subunit protein uS9</fullName>
    </recommendedName>
    <alternativeName>
        <fullName>30S ribosomal protein S9</fullName>
    </alternativeName>
</protein>
<accession>Q9PKR2</accession>
<reference key="1">
    <citation type="journal article" date="2000" name="Nucleic Acids Res.">
        <title>Genome sequences of Chlamydia trachomatis MoPn and Chlamydia pneumoniae AR39.</title>
        <authorList>
            <person name="Read T.D."/>
            <person name="Brunham R.C."/>
            <person name="Shen C."/>
            <person name="Gill S.R."/>
            <person name="Heidelberg J.F."/>
            <person name="White O."/>
            <person name="Hickey E.K."/>
            <person name="Peterson J.D."/>
            <person name="Utterback T.R."/>
            <person name="Berry K.J."/>
            <person name="Bass S."/>
            <person name="Linher K.D."/>
            <person name="Weidman J.F."/>
            <person name="Khouri H.M."/>
            <person name="Craven B."/>
            <person name="Bowman C."/>
            <person name="Dodson R.J."/>
            <person name="Gwinn M.L."/>
            <person name="Nelson W.C."/>
            <person name="DeBoy R.T."/>
            <person name="Kolonay J.F."/>
            <person name="McClarty G."/>
            <person name="Salzberg S.L."/>
            <person name="Eisen J.A."/>
            <person name="Fraser C.M."/>
        </authorList>
    </citation>
    <scope>NUCLEOTIDE SEQUENCE [LARGE SCALE GENOMIC DNA]</scope>
    <source>
        <strain>MoPn / Nigg</strain>
    </source>
</reference>
<keyword id="KW-0687">Ribonucleoprotein</keyword>
<keyword id="KW-0689">Ribosomal protein</keyword>
<comment type="similarity">
    <text evidence="2">Belongs to the universal ribosomal protein uS9 family.</text>
</comment>